<name>NIFE_RIPO1</name>
<gene>
    <name type="primary">nifE</name>
    <name type="ordered locus">PCC8801_1788</name>
</gene>
<accession>O07355</accession>
<accession>B7JWY5</accession>
<evidence type="ECO:0000256" key="1">
    <source>
        <dbReference type="SAM" id="MobiDB-lite"/>
    </source>
</evidence>
<evidence type="ECO:0000305" key="2"/>
<keyword id="KW-0535">Nitrogen fixation</keyword>
<keyword id="KW-1185">Reference proteome</keyword>
<proteinExistence type="inferred from homology"/>
<feature type="chain" id="PRO_0000153124" description="Nitrogenase iron-molybdenum cofactor biosynthesis protein NifE">
    <location>
        <begin position="1"/>
        <end position="470"/>
    </location>
</feature>
<feature type="region of interest" description="Disordered" evidence="1">
    <location>
        <begin position="11"/>
        <end position="35"/>
    </location>
</feature>
<feature type="compositionally biased region" description="Basic and acidic residues" evidence="1">
    <location>
        <begin position="18"/>
        <end position="27"/>
    </location>
</feature>
<feature type="sequence conflict" description="In Ref. 1; AAC35194." evidence="2" ref="1">
    <original>NKSCTQQAQPGSAQ</original>
    <variation>TNLVPNRLNLAQHK</variation>
    <location>
        <begin position="29"/>
        <end position="42"/>
    </location>
</feature>
<feature type="sequence conflict" description="In Ref. 1; AAC35194." evidence="2" ref="1">
    <location>
        <position position="234"/>
    </location>
</feature>
<dbReference type="EMBL" id="AF003700">
    <property type="protein sequence ID" value="AAC35194.1"/>
    <property type="molecule type" value="Genomic_DNA"/>
</dbReference>
<dbReference type="EMBL" id="CP001287">
    <property type="protein sequence ID" value="ACK65834.1"/>
    <property type="molecule type" value="Genomic_DNA"/>
</dbReference>
<dbReference type="RefSeq" id="WP_012595107.1">
    <property type="nucleotide sequence ID" value="NC_011726.1"/>
</dbReference>
<dbReference type="SMR" id="O07355"/>
<dbReference type="STRING" id="41431.PCC8801_1788"/>
<dbReference type="KEGG" id="cyp:PCC8801_1788"/>
<dbReference type="eggNOG" id="COG2710">
    <property type="taxonomic scope" value="Bacteria"/>
</dbReference>
<dbReference type="HOGENOM" id="CLU_025876_1_1_3"/>
<dbReference type="OrthoDB" id="9767044at2"/>
<dbReference type="UniPathway" id="UPA00782"/>
<dbReference type="Proteomes" id="UP000008204">
    <property type="component" value="Chromosome"/>
</dbReference>
<dbReference type="GO" id="GO:0016163">
    <property type="term" value="F:nitrogenase activity"/>
    <property type="evidence" value="ECO:0007669"/>
    <property type="project" value="InterPro"/>
</dbReference>
<dbReference type="GO" id="GO:0009399">
    <property type="term" value="P:nitrogen fixation"/>
    <property type="evidence" value="ECO:0007669"/>
    <property type="project" value="UniProtKB-KW"/>
</dbReference>
<dbReference type="GO" id="GO:0065003">
    <property type="term" value="P:protein-containing complex assembly"/>
    <property type="evidence" value="ECO:0007669"/>
    <property type="project" value="InterPro"/>
</dbReference>
<dbReference type="CDD" id="cd01968">
    <property type="entry name" value="Nitrogenase_NifE_I"/>
    <property type="match status" value="1"/>
</dbReference>
<dbReference type="Gene3D" id="3.40.50.12380">
    <property type="entry name" value="Nitrogenase MoFe cofactor biosynthesis protein NifE, C-terminal"/>
    <property type="match status" value="1"/>
</dbReference>
<dbReference type="Gene3D" id="3.40.50.1980">
    <property type="entry name" value="Nitrogenase molybdenum iron protein domain"/>
    <property type="match status" value="1"/>
</dbReference>
<dbReference type="InterPro" id="IPR000510">
    <property type="entry name" value="Nase/OxRdtase_comp1"/>
</dbReference>
<dbReference type="InterPro" id="IPR000318">
    <property type="entry name" value="Nase_comp1_CS"/>
</dbReference>
<dbReference type="InterPro" id="IPR005973">
    <property type="entry name" value="NifE"/>
</dbReference>
<dbReference type="InterPro" id="IPR049939">
    <property type="entry name" value="NifE-like"/>
</dbReference>
<dbReference type="NCBIfam" id="TIGR01283">
    <property type="entry name" value="nifE"/>
    <property type="match status" value="1"/>
</dbReference>
<dbReference type="PANTHER" id="PTHR42956">
    <property type="entry name" value="NITROGENASE IRON-MOLYBDENUM COFACTOR BIOSYNTHESIS PROTEIN NIFE"/>
    <property type="match status" value="1"/>
</dbReference>
<dbReference type="PANTHER" id="PTHR42956:SF1">
    <property type="entry name" value="NITROGENASE IRON-MOLYBDENUM COFACTOR BIOSYNTHESIS PROTEIN NIFE"/>
    <property type="match status" value="1"/>
</dbReference>
<dbReference type="Pfam" id="PF00148">
    <property type="entry name" value="Oxidored_nitro"/>
    <property type="match status" value="1"/>
</dbReference>
<dbReference type="SUPFAM" id="SSF53807">
    <property type="entry name" value="Helical backbone' metal receptor"/>
    <property type="match status" value="1"/>
</dbReference>
<dbReference type="PROSITE" id="PS00699">
    <property type="entry name" value="NITROGENASE_1_1"/>
    <property type="match status" value="1"/>
</dbReference>
<dbReference type="PROSITE" id="PS00090">
    <property type="entry name" value="NITROGENASE_1_2"/>
    <property type="match status" value="1"/>
</dbReference>
<sequence>MKLTKGKINELLTQPGCEHNHNKEGQGKNKSCTQQAQPGSAQGGCAFDGASIALVPITDAAHLVHGSIACSGNSWNSRGSLSSGPMTYKMGFTTDLSENDVIFGGEKKLYQAIAQLVKRYHPAAVFVYSTCVTALIGDDLDAVCKAATKKYETPIIPVHAPGFVGSKNLGNRLGGEALLDHVVGTREPEFTTDFDINLIGEYNVAGEMWGVLPLFEKLGIRVLAKITGDARYEEVCYAHRAKLNLMICSKALINMATAMQERYGIPYIEESFYGIADMNRCLRNIAEYFGDAALKERVEQLIEEETTKLDLALAPYRERLKGKRVVLYTGGVKSWSVVSAAQDLGMEVVATSTKKSTEEDKAKIRELLGKDGIMLEKGSPTELLRVVEQTKADLLVAGGRNQYTALKARIPFLDINQERHHPYAGYVGMIEMARELDEAVHSPIWRLVRQPSPWDIWQQEHESLLNLEAE</sequence>
<reference key="1">
    <citation type="journal article" date="1999" name="Microbiology">
        <title>Organization and expression of nitrogen-fixation genes in the aerobic nitrogen-fixing unicellular cyanobacterium Synechococcus sp. strain RF-1.</title>
        <authorList>
            <person name="Huang T.-C."/>
            <person name="Lin R.-F."/>
            <person name="Chu M.-K."/>
            <person name="Chen H.-M."/>
        </authorList>
    </citation>
    <scope>NUCLEOTIDE SEQUENCE [GENOMIC DNA]</scope>
</reference>
<reference key="2">
    <citation type="journal article" date="2011" name="MBio">
        <title>Novel metabolic attributes of the genus Cyanothece, comprising a group of unicellular nitrogen-fixing Cyanobacteria.</title>
        <authorList>
            <person name="Bandyopadhyay A."/>
            <person name="Elvitigala T."/>
            <person name="Welsh E."/>
            <person name="Stockel J."/>
            <person name="Liberton M."/>
            <person name="Min H."/>
            <person name="Sherman L.A."/>
            <person name="Pakrasi H.B."/>
        </authorList>
    </citation>
    <scope>NUCLEOTIDE SEQUENCE [LARGE SCALE GENOMIC DNA]</scope>
    <source>
        <strain>PCC 8801 / RF-1</strain>
    </source>
</reference>
<organism>
    <name type="scientific">Rippkaea orientalis (strain PCC 8801 / RF-1)</name>
    <name type="common">Cyanothece sp. (strain PCC 8801)</name>
    <dbReference type="NCBI Taxonomy" id="41431"/>
    <lineage>
        <taxon>Bacteria</taxon>
        <taxon>Bacillati</taxon>
        <taxon>Cyanobacteriota</taxon>
        <taxon>Cyanophyceae</taxon>
        <taxon>Oscillatoriophycideae</taxon>
        <taxon>Chroococcales</taxon>
        <taxon>Aphanothecaceae</taxon>
        <taxon>Rippkaea</taxon>
        <taxon>Rippkaea orientalis</taxon>
    </lineage>
</organism>
<protein>
    <recommendedName>
        <fullName>Nitrogenase iron-molybdenum cofactor biosynthesis protein NifE</fullName>
    </recommendedName>
</protein>
<comment type="function">
    <text>This protein may play a role in the biosynthesis of the prosthetic group of nitrogenase (FeMo cofactor).</text>
</comment>
<comment type="pathway">
    <text>Cofactor biosynthesis; Fe-Mo cofactor biosynthesis.</text>
</comment>
<comment type="similarity">
    <text evidence="2">Belongs to the NifD/NifK/NifE/NifN family.</text>
</comment>